<feature type="chain" id="PRO_0000428571" description="Ribonuclease VapC9">
    <location>
        <begin position="1"/>
        <end position="127"/>
    </location>
</feature>
<feature type="domain" description="PINc" evidence="1">
    <location>
        <begin position="2"/>
        <end position="115"/>
    </location>
</feature>
<feature type="binding site" evidence="1">
    <location>
        <position position="5"/>
    </location>
    <ligand>
        <name>Mg(2+)</name>
        <dbReference type="ChEBI" id="CHEBI:18420"/>
    </ligand>
</feature>
<feature type="binding site" evidence="1">
    <location>
        <position position="91"/>
    </location>
    <ligand>
        <name>Mg(2+)</name>
        <dbReference type="ChEBI" id="CHEBI:18420"/>
    </ligand>
</feature>
<dbReference type="EC" id="3.1.-.-" evidence="1"/>
<dbReference type="EMBL" id="AE000516">
    <property type="protein sequence ID" value="AAK45236.1"/>
    <property type="molecule type" value="Genomic_DNA"/>
</dbReference>
<dbReference type="PIR" id="F70717">
    <property type="entry name" value="F70717"/>
</dbReference>
<dbReference type="RefSeq" id="WP_003404903.1">
    <property type="nucleotide sequence ID" value="NZ_KK341227.1"/>
</dbReference>
<dbReference type="SMR" id="P9WFA8"/>
<dbReference type="KEGG" id="mtc:MT0988"/>
<dbReference type="PATRIC" id="fig|83331.31.peg.1060"/>
<dbReference type="HOGENOM" id="CLU_121774_0_0_11"/>
<dbReference type="Proteomes" id="UP000001020">
    <property type="component" value="Chromosome"/>
</dbReference>
<dbReference type="GO" id="GO:0000287">
    <property type="term" value="F:magnesium ion binding"/>
    <property type="evidence" value="ECO:0007669"/>
    <property type="project" value="UniProtKB-UniRule"/>
</dbReference>
<dbReference type="GO" id="GO:0004540">
    <property type="term" value="F:RNA nuclease activity"/>
    <property type="evidence" value="ECO:0007669"/>
    <property type="project" value="InterPro"/>
</dbReference>
<dbReference type="CDD" id="cd09873">
    <property type="entry name" value="PIN_Pae0151-like"/>
    <property type="match status" value="1"/>
</dbReference>
<dbReference type="Gene3D" id="3.40.50.1010">
    <property type="entry name" value="5'-nuclease"/>
    <property type="match status" value="1"/>
</dbReference>
<dbReference type="HAMAP" id="MF_00265">
    <property type="entry name" value="VapC_Nob1"/>
    <property type="match status" value="1"/>
</dbReference>
<dbReference type="InterPro" id="IPR029060">
    <property type="entry name" value="PIN-like_dom_sf"/>
</dbReference>
<dbReference type="InterPro" id="IPR002716">
    <property type="entry name" value="PIN_dom"/>
</dbReference>
<dbReference type="InterPro" id="IPR044153">
    <property type="entry name" value="PIN_Pae0151-like"/>
</dbReference>
<dbReference type="InterPro" id="IPR051619">
    <property type="entry name" value="TypeII_TA_RNase_PINc/VapC"/>
</dbReference>
<dbReference type="InterPro" id="IPR022907">
    <property type="entry name" value="VapC_family"/>
</dbReference>
<dbReference type="PANTHER" id="PTHR35901:SF1">
    <property type="entry name" value="EXONUCLEASE VAPC9"/>
    <property type="match status" value="1"/>
</dbReference>
<dbReference type="PANTHER" id="PTHR35901">
    <property type="entry name" value="RIBONUCLEASE VAPC3"/>
    <property type="match status" value="1"/>
</dbReference>
<dbReference type="Pfam" id="PF01850">
    <property type="entry name" value="PIN"/>
    <property type="match status" value="1"/>
</dbReference>
<dbReference type="SUPFAM" id="SSF88723">
    <property type="entry name" value="PIN domain-like"/>
    <property type="match status" value="1"/>
</dbReference>
<gene>
    <name evidence="1" type="primary">vapC9</name>
    <name type="ordered locus">MT0988</name>
</gene>
<organism>
    <name type="scientific">Mycobacterium tuberculosis (strain CDC 1551 / Oshkosh)</name>
    <dbReference type="NCBI Taxonomy" id="83331"/>
    <lineage>
        <taxon>Bacteria</taxon>
        <taxon>Bacillati</taxon>
        <taxon>Actinomycetota</taxon>
        <taxon>Actinomycetes</taxon>
        <taxon>Mycobacteriales</taxon>
        <taxon>Mycobacteriaceae</taxon>
        <taxon>Mycobacterium</taxon>
        <taxon>Mycobacterium tuberculosis complex</taxon>
    </lineage>
</organism>
<sequence length="127" mass="13859">MIVVDASAALAALLNDGQARQLIAAERLHVPHLVDSEIASGLRRLAQRDRLGAADGRRALQTWRRLAVTRYPVVGLFERIWEIRANLSAYDASYVALAEALNCALVTADLRLSDTGQAQCPITVVPR</sequence>
<protein>
    <recommendedName>
        <fullName evidence="1">Ribonuclease VapC9</fullName>
        <shortName evidence="1">RNase VapC9</shortName>
        <ecNumber evidence="1">3.1.-.-</ecNumber>
    </recommendedName>
    <alternativeName>
        <fullName evidence="1">Toxin VapC9</fullName>
    </alternativeName>
</protein>
<proteinExistence type="inferred from homology"/>
<reference key="1">
    <citation type="journal article" date="2002" name="J. Bacteriol.">
        <title>Whole-genome comparison of Mycobacterium tuberculosis clinical and laboratory strains.</title>
        <authorList>
            <person name="Fleischmann R.D."/>
            <person name="Alland D."/>
            <person name="Eisen J.A."/>
            <person name="Carpenter L."/>
            <person name="White O."/>
            <person name="Peterson J.D."/>
            <person name="DeBoy R.T."/>
            <person name="Dodson R.J."/>
            <person name="Gwinn M.L."/>
            <person name="Haft D.H."/>
            <person name="Hickey E.K."/>
            <person name="Kolonay J.F."/>
            <person name="Nelson W.C."/>
            <person name="Umayam L.A."/>
            <person name="Ermolaeva M.D."/>
            <person name="Salzberg S.L."/>
            <person name="Delcher A."/>
            <person name="Utterback T.R."/>
            <person name="Weidman J.F."/>
            <person name="Khouri H.M."/>
            <person name="Gill J."/>
            <person name="Mikula A."/>
            <person name="Bishai W."/>
            <person name="Jacobs W.R. Jr."/>
            <person name="Venter J.C."/>
            <person name="Fraser C.M."/>
        </authorList>
    </citation>
    <scope>NUCLEOTIDE SEQUENCE [LARGE SCALE GENOMIC DNA]</scope>
    <source>
        <strain>CDC 1551 / Oshkosh</strain>
    </source>
</reference>
<keyword id="KW-0378">Hydrolase</keyword>
<keyword id="KW-0460">Magnesium</keyword>
<keyword id="KW-0479">Metal-binding</keyword>
<keyword id="KW-0540">Nuclease</keyword>
<keyword id="KW-1185">Reference proteome</keyword>
<keyword id="KW-1277">Toxin-antitoxin system</keyword>
<accession>P9WFA8</accession>
<accession>L0T6X4</accession>
<accession>P64773</accession>
<accession>P71550</accession>
<name>VAPC9_MYCTO</name>
<comment type="function">
    <text evidence="1">Toxic component of a type II toxin-antitoxin (TA) system. An RNase. The cognate antitoxin is VapB9 (By similarity).</text>
</comment>
<comment type="cofactor">
    <cofactor evidence="1">
        <name>Mg(2+)</name>
        <dbReference type="ChEBI" id="CHEBI:18420"/>
    </cofactor>
</comment>
<comment type="similarity">
    <text evidence="1">Belongs to the PINc/VapC protein family.</text>
</comment>
<evidence type="ECO:0000255" key="1">
    <source>
        <dbReference type="HAMAP-Rule" id="MF_00265"/>
    </source>
</evidence>